<accession>Q32RG9</accession>
<feature type="chain" id="PRO_0000277139" description="Photosystem I P700 chlorophyll a apoprotein A2">
    <location>
        <begin position="1"/>
        <end position="734"/>
    </location>
</feature>
<feature type="transmembrane region" description="Helical; Name=I" evidence="1">
    <location>
        <begin position="46"/>
        <end position="69"/>
    </location>
</feature>
<feature type="transmembrane region" description="Helical; Name=II" evidence="1">
    <location>
        <begin position="135"/>
        <end position="158"/>
    </location>
</feature>
<feature type="transmembrane region" description="Helical; Name=III" evidence="1">
    <location>
        <begin position="175"/>
        <end position="199"/>
    </location>
</feature>
<feature type="transmembrane region" description="Helical; Name=IV" evidence="1">
    <location>
        <begin position="273"/>
        <end position="291"/>
    </location>
</feature>
<feature type="transmembrane region" description="Helical; Name=V" evidence="1">
    <location>
        <begin position="330"/>
        <end position="353"/>
    </location>
</feature>
<feature type="transmembrane region" description="Helical; Name=VI" evidence="1">
    <location>
        <begin position="369"/>
        <end position="395"/>
    </location>
</feature>
<feature type="transmembrane region" description="Helical; Name=VII" evidence="1">
    <location>
        <begin position="417"/>
        <end position="439"/>
    </location>
</feature>
<feature type="transmembrane region" description="Helical; Name=VIII" evidence="1">
    <location>
        <begin position="517"/>
        <end position="535"/>
    </location>
</feature>
<feature type="transmembrane region" description="Helical; Name=IX" evidence="1">
    <location>
        <begin position="575"/>
        <end position="596"/>
    </location>
</feature>
<feature type="transmembrane region" description="Helical; Name=X" evidence="1">
    <location>
        <begin position="643"/>
        <end position="665"/>
    </location>
</feature>
<feature type="transmembrane region" description="Helical; Name=XI" evidence="1">
    <location>
        <begin position="707"/>
        <end position="727"/>
    </location>
</feature>
<feature type="binding site" evidence="1">
    <location>
        <position position="559"/>
    </location>
    <ligand>
        <name>[4Fe-4S] cluster</name>
        <dbReference type="ChEBI" id="CHEBI:49883"/>
        <note>ligand shared between dimeric partners</note>
    </ligand>
</feature>
<feature type="binding site" evidence="1">
    <location>
        <position position="568"/>
    </location>
    <ligand>
        <name>[4Fe-4S] cluster</name>
        <dbReference type="ChEBI" id="CHEBI:49883"/>
        <note>ligand shared between dimeric partners</note>
    </ligand>
</feature>
<feature type="binding site" description="axial binding residue" evidence="1">
    <location>
        <position position="654"/>
    </location>
    <ligand>
        <name>chlorophyll a</name>
        <dbReference type="ChEBI" id="CHEBI:58416"/>
        <label>B1</label>
    </ligand>
    <ligandPart>
        <name>Mg</name>
        <dbReference type="ChEBI" id="CHEBI:25107"/>
    </ligandPart>
</feature>
<feature type="binding site" description="axial binding residue" evidence="1">
    <location>
        <position position="662"/>
    </location>
    <ligand>
        <name>chlorophyll a</name>
        <dbReference type="ChEBI" id="CHEBI:58416"/>
        <label>B3</label>
    </ligand>
    <ligandPart>
        <name>Mg</name>
        <dbReference type="ChEBI" id="CHEBI:25107"/>
    </ligandPart>
</feature>
<feature type="binding site" evidence="1">
    <location>
        <position position="670"/>
    </location>
    <ligand>
        <name>chlorophyll a</name>
        <dbReference type="ChEBI" id="CHEBI:58416"/>
        <label>B3</label>
    </ligand>
</feature>
<feature type="binding site" evidence="1">
    <location>
        <position position="671"/>
    </location>
    <ligand>
        <name>phylloquinone</name>
        <dbReference type="ChEBI" id="CHEBI:18067"/>
        <label>B</label>
    </ligand>
</feature>
<keyword id="KW-0004">4Fe-4S</keyword>
<keyword id="KW-0148">Chlorophyll</keyword>
<keyword id="KW-0150">Chloroplast</keyword>
<keyword id="KW-0157">Chromophore</keyword>
<keyword id="KW-0249">Electron transport</keyword>
<keyword id="KW-0408">Iron</keyword>
<keyword id="KW-0411">Iron-sulfur</keyword>
<keyword id="KW-0460">Magnesium</keyword>
<keyword id="KW-0472">Membrane</keyword>
<keyword id="KW-0479">Metal-binding</keyword>
<keyword id="KW-0560">Oxidoreductase</keyword>
<keyword id="KW-0602">Photosynthesis</keyword>
<keyword id="KW-0603">Photosystem I</keyword>
<keyword id="KW-0934">Plastid</keyword>
<keyword id="KW-0793">Thylakoid</keyword>
<keyword id="KW-0812">Transmembrane</keyword>
<keyword id="KW-1133">Transmembrane helix</keyword>
<keyword id="KW-0813">Transport</keyword>
<comment type="function">
    <text evidence="1">PsaA and PsaB bind P700, the primary electron donor of photosystem I (PSI), as well as the electron acceptors A0, A1 and FX. PSI is a plastocyanin-ferredoxin oxidoreductase, converting photonic excitation into a charge separation, which transfers an electron from the donor P700 chlorophyll pair to the spectroscopically characterized acceptors A0, A1, FX, FA and FB in turn. Oxidized P700 is reduced on the lumenal side of the thylakoid membrane by plastocyanin.</text>
</comment>
<comment type="catalytic activity">
    <reaction evidence="1">
        <text>reduced [plastocyanin] + hnu + oxidized [2Fe-2S]-[ferredoxin] = oxidized [plastocyanin] + reduced [2Fe-2S]-[ferredoxin]</text>
        <dbReference type="Rhea" id="RHEA:30407"/>
        <dbReference type="Rhea" id="RHEA-COMP:10000"/>
        <dbReference type="Rhea" id="RHEA-COMP:10001"/>
        <dbReference type="Rhea" id="RHEA-COMP:10039"/>
        <dbReference type="Rhea" id="RHEA-COMP:10040"/>
        <dbReference type="ChEBI" id="CHEBI:29036"/>
        <dbReference type="ChEBI" id="CHEBI:30212"/>
        <dbReference type="ChEBI" id="CHEBI:33737"/>
        <dbReference type="ChEBI" id="CHEBI:33738"/>
        <dbReference type="ChEBI" id="CHEBI:49552"/>
        <dbReference type="EC" id="1.97.1.12"/>
    </reaction>
</comment>
<comment type="cofactor">
    <text evidence="1">P700 is a chlorophyll a/chlorophyll a' dimer, A0 is one or more chlorophyll a, A1 is one or both phylloquinones and FX is a shared 4Fe-4S iron-sulfur center.</text>
</comment>
<comment type="subunit">
    <text evidence="1">The PsaA/B heterodimer binds the P700 chlorophyll special pair and subsequent electron acceptors. PSI consists of a core antenna complex that captures photons, and an electron transfer chain that converts photonic excitation into a charge separation. The eukaryotic PSI reaction center is composed of at least 11 subunits.</text>
</comment>
<comment type="subcellular location">
    <subcellularLocation>
        <location>Plastid</location>
        <location>Chloroplast thylakoid membrane</location>
        <topology>Multi-pass membrane protein</topology>
    </subcellularLocation>
</comment>
<comment type="similarity">
    <text evidence="1">Belongs to the PsaA/PsaB family.</text>
</comment>
<gene>
    <name evidence="1" type="primary">psaB</name>
</gene>
<evidence type="ECO:0000255" key="1">
    <source>
        <dbReference type="HAMAP-Rule" id="MF_00482"/>
    </source>
</evidence>
<sequence>MASRFPKFSQGLAQDPTTRRIWFGIATAHDFESHDDITEERLYQKIFASHFGQLAVIFLWTSGNLFHVAWQGNFEAWGKDPLHVRPIAHAIWDPHFGQPAVEAFTRGGASGPVNIAYSGVYQWWYTIGMRTNQDLYTGALFLLAVSAVALVAGWLHLQPKWKPSVSWFKNAESRLNHHLSGLFGVSSLAWTGHLVHVAIPESRGQHIGWDNFLTTPPHPQGLTPFFSGQWSVYAQDADSSGHLFGTTEGAGTAILTFLGGFHPQTQSLWLTDIAHHHLAIAVLFIVAGHMYRTNFGIGHSIREILDAHVPPAGRLGRGHQGLYDTINNSLHFQLGLALASLGVITSLVAQHMYSLPPYAFLAQDFTTQAALYTHHQYIAGFIMTGAFAHGAIFFIRDYNPEQNKSNVLARMLEHKEAIISHLSWASLFLGFHTLGLYVHNDVMLAFGTPEKQILIEPVFAQWIQSAHGKSLYGFDVLLSNAASPALSAGQSIWLPGWLDAINSGSNSLFLTIGPGDFLVHHAIALGLHTTTLILVKGALDARGSKLMPDKKEFGFSFPCDGPGRGGTCDISAWDAFYLAVFWMLNTIGWVTFYWHWKHLTLWQGNAAQFAESSTYLMGWLRDYLWLNSSQLINGYNPFGMNSLSVWAWMFLFGHLVWATGFMFLISWRGYWQELIETLAWAHERTPLANLVRWKDKPVALSIVQARLVGLAHFSVGYIFTYAAFLIASTSGKFG</sequence>
<organism>
    <name type="scientific">Zygnema circumcarinatum</name>
    <name type="common">Green alga</name>
    <dbReference type="NCBI Taxonomy" id="35869"/>
    <lineage>
        <taxon>Eukaryota</taxon>
        <taxon>Viridiplantae</taxon>
        <taxon>Streptophyta</taxon>
        <taxon>Zygnematophyceae</taxon>
        <taxon>Zygnematophycidae</taxon>
        <taxon>Zygnematales</taxon>
        <taxon>Zygnemataceae</taxon>
        <taxon>Zygnema</taxon>
    </lineage>
</organism>
<dbReference type="EC" id="1.97.1.12" evidence="1"/>
<dbReference type="EMBL" id="AY958086">
    <property type="protein sequence ID" value="AAX45831.1"/>
    <property type="molecule type" value="Genomic_DNA"/>
</dbReference>
<dbReference type="RefSeq" id="YP_636557.1">
    <property type="nucleotide sequence ID" value="NC_008117.1"/>
</dbReference>
<dbReference type="SMR" id="Q32RG9"/>
<dbReference type="GeneID" id="4108151"/>
<dbReference type="GO" id="GO:0009535">
    <property type="term" value="C:chloroplast thylakoid membrane"/>
    <property type="evidence" value="ECO:0007669"/>
    <property type="project" value="UniProtKB-SubCell"/>
</dbReference>
<dbReference type="GO" id="GO:0009522">
    <property type="term" value="C:photosystem I"/>
    <property type="evidence" value="ECO:0007669"/>
    <property type="project" value="UniProtKB-KW"/>
</dbReference>
<dbReference type="GO" id="GO:0051539">
    <property type="term" value="F:4 iron, 4 sulfur cluster binding"/>
    <property type="evidence" value="ECO:0007669"/>
    <property type="project" value="UniProtKB-KW"/>
</dbReference>
<dbReference type="GO" id="GO:0016168">
    <property type="term" value="F:chlorophyll binding"/>
    <property type="evidence" value="ECO:0007669"/>
    <property type="project" value="UniProtKB-KW"/>
</dbReference>
<dbReference type="GO" id="GO:0009055">
    <property type="term" value="F:electron transfer activity"/>
    <property type="evidence" value="ECO:0007669"/>
    <property type="project" value="UniProtKB-UniRule"/>
</dbReference>
<dbReference type="GO" id="GO:0000287">
    <property type="term" value="F:magnesium ion binding"/>
    <property type="evidence" value="ECO:0007669"/>
    <property type="project" value="UniProtKB-UniRule"/>
</dbReference>
<dbReference type="GO" id="GO:0016491">
    <property type="term" value="F:oxidoreductase activity"/>
    <property type="evidence" value="ECO:0007669"/>
    <property type="project" value="UniProtKB-KW"/>
</dbReference>
<dbReference type="GO" id="GO:0015979">
    <property type="term" value="P:photosynthesis"/>
    <property type="evidence" value="ECO:0007669"/>
    <property type="project" value="UniProtKB-UniRule"/>
</dbReference>
<dbReference type="FunFam" id="1.20.1130.10:FF:000001">
    <property type="entry name" value="Photosystem I P700 chlorophyll a apoprotein A2"/>
    <property type="match status" value="1"/>
</dbReference>
<dbReference type="Gene3D" id="1.20.1130.10">
    <property type="entry name" value="Photosystem I PsaA/PsaB"/>
    <property type="match status" value="1"/>
</dbReference>
<dbReference type="HAMAP" id="MF_00482">
    <property type="entry name" value="PSI_PsaB"/>
    <property type="match status" value="1"/>
</dbReference>
<dbReference type="InterPro" id="IPR001280">
    <property type="entry name" value="PSI_PsaA/B"/>
</dbReference>
<dbReference type="InterPro" id="IPR020586">
    <property type="entry name" value="PSI_PsaA/B_CS"/>
</dbReference>
<dbReference type="InterPro" id="IPR036408">
    <property type="entry name" value="PSI_PsaA/B_sf"/>
</dbReference>
<dbReference type="InterPro" id="IPR006244">
    <property type="entry name" value="PSI_PsaB"/>
</dbReference>
<dbReference type="NCBIfam" id="TIGR01336">
    <property type="entry name" value="psaB"/>
    <property type="match status" value="1"/>
</dbReference>
<dbReference type="PANTHER" id="PTHR30128">
    <property type="entry name" value="OUTER MEMBRANE PROTEIN, OMPA-RELATED"/>
    <property type="match status" value="1"/>
</dbReference>
<dbReference type="PANTHER" id="PTHR30128:SF19">
    <property type="entry name" value="PHOTOSYSTEM I P700 CHLOROPHYLL A APOPROTEIN A1-RELATED"/>
    <property type="match status" value="1"/>
</dbReference>
<dbReference type="Pfam" id="PF00223">
    <property type="entry name" value="PsaA_PsaB"/>
    <property type="match status" value="1"/>
</dbReference>
<dbReference type="PIRSF" id="PIRSF002905">
    <property type="entry name" value="PSI_A"/>
    <property type="match status" value="1"/>
</dbReference>
<dbReference type="PRINTS" id="PR00257">
    <property type="entry name" value="PHOTSYSPSAAB"/>
</dbReference>
<dbReference type="SUPFAM" id="SSF81558">
    <property type="entry name" value="Photosystem I subunits PsaA/PsaB"/>
    <property type="match status" value="1"/>
</dbReference>
<dbReference type="PROSITE" id="PS00419">
    <property type="entry name" value="PHOTOSYSTEM_I_PSAAB"/>
    <property type="match status" value="1"/>
</dbReference>
<reference key="1">
    <citation type="journal article" date="2005" name="BMC Biol.">
        <title>The complete chloroplast DNA sequences of the charophycean green algae Staurastrum and Zygnema reveal that the chloroplast genome underwent extensive changes during the evolution of the Zygnematales.</title>
        <authorList>
            <person name="Turmel M."/>
            <person name="Otis C."/>
            <person name="Lemieux C."/>
        </authorList>
    </citation>
    <scope>NUCLEOTIDE SEQUENCE [LARGE SCALE GENOMIC DNA]</scope>
</reference>
<geneLocation type="chloroplast"/>
<name>PSAB_ZYGCR</name>
<protein>
    <recommendedName>
        <fullName evidence="1">Photosystem I P700 chlorophyll a apoprotein A2</fullName>
        <ecNumber evidence="1">1.97.1.12</ecNumber>
    </recommendedName>
    <alternativeName>
        <fullName evidence="1">PSI-B</fullName>
    </alternativeName>
    <alternativeName>
        <fullName evidence="1">PsaB</fullName>
    </alternativeName>
</protein>
<proteinExistence type="inferred from homology"/>